<feature type="chain" id="PRO_0000084114" description="Bifunctional epoxide hydrolase 2">
    <location>
        <begin position="1"/>
        <end position="554"/>
    </location>
</feature>
<feature type="domain" description="AB hydrolase-1" evidence="4">
    <location>
        <begin position="257"/>
        <end position="530"/>
    </location>
</feature>
<feature type="region of interest" description="Phosphatase">
    <location>
        <begin position="1"/>
        <end position="224"/>
    </location>
</feature>
<feature type="region of interest" description="Epoxide hydrolase">
    <location>
        <begin position="233"/>
        <end position="554"/>
    </location>
</feature>
<feature type="short sequence motif" description="Microbody targeting signal" evidence="4">
    <location>
        <begin position="552"/>
        <end position="554"/>
    </location>
</feature>
<feature type="active site" description="Nucleophile" evidence="7">
    <location>
        <position position="333"/>
    </location>
</feature>
<feature type="active site" description="Proton donor" evidence="2">
    <location>
        <position position="465"/>
    </location>
</feature>
<feature type="active site" description="Proton acceptor" evidence="7">
    <location>
        <position position="523"/>
    </location>
</feature>
<feature type="binding site" evidence="2">
    <location>
        <position position="9"/>
    </location>
    <ligand>
        <name>Mg(2+)</name>
        <dbReference type="ChEBI" id="CHEBI:18420"/>
    </ligand>
</feature>
<feature type="binding site" evidence="2">
    <location>
        <position position="11"/>
    </location>
    <ligand>
        <name>Mg(2+)</name>
        <dbReference type="ChEBI" id="CHEBI:18420"/>
    </ligand>
</feature>
<feature type="binding site" evidence="2">
    <location>
        <begin position="123"/>
        <end position="124"/>
    </location>
    <ligand>
        <name>phosphate</name>
        <dbReference type="ChEBI" id="CHEBI:43474"/>
    </ligand>
</feature>
<feature type="binding site" evidence="2">
    <location>
        <position position="185"/>
    </location>
    <ligand>
        <name>Mg(2+)</name>
        <dbReference type="ChEBI" id="CHEBI:18420"/>
    </ligand>
</feature>
<feature type="binding site" evidence="2">
    <location>
        <position position="381"/>
    </location>
    <ligand>
        <name>substrate</name>
    </ligand>
</feature>
<feature type="modified residue" description="N6-succinyllysine" evidence="3">
    <location>
        <position position="55"/>
    </location>
</feature>
<feature type="modified residue" description="N6-acetyllysine; alternate" evidence="3">
    <location>
        <position position="176"/>
    </location>
</feature>
<feature type="modified residue" description="N6-succinyllysine; alternate" evidence="3">
    <location>
        <position position="176"/>
    </location>
</feature>
<feature type="modified residue" description="N6-acetyllysine" evidence="3">
    <location>
        <position position="191"/>
    </location>
</feature>
<feature type="modified residue" description="N6-acetyllysine" evidence="3">
    <location>
        <position position="215"/>
    </location>
</feature>
<feature type="modified residue" description="Phosphoserine" evidence="3">
    <location>
        <position position="368"/>
    </location>
</feature>
<feature type="modified residue" description="N6-succinyllysine" evidence="3">
    <location>
        <position position="420"/>
    </location>
</feature>
<feature type="modified residue" description="N6-succinyllysine" evidence="3">
    <location>
        <position position="454"/>
    </location>
</feature>
<feature type="modified residue" description="N6-succinyllysine" evidence="3">
    <location>
        <position position="504"/>
    </location>
</feature>
<feature type="modified residue" description="N6-succinyllysine" evidence="3">
    <location>
        <position position="553"/>
    </location>
</feature>
<feature type="lipid moiety-binding region" description="S-(15-deoxy-Delta12,14-prostaglandin J2-9-yl)cysteine" evidence="1">
    <location>
        <position position="521"/>
    </location>
</feature>
<feature type="mutagenesis site" description="Reduces epoxide hydrolase activity by 95%.">
    <original>H</original>
    <variation>Q</variation>
    <location>
        <position position="332"/>
    </location>
</feature>
<feature type="mutagenesis site" description="Loss of epoxide hydrolase activity." evidence="7">
    <original>D</original>
    <variation>G</variation>
    <location>
        <position position="333"/>
    </location>
</feature>
<feature type="mutagenesis site" description="Slight reduction of epoxide hydrolase activity." evidence="7">
    <original>W</original>
    <variation>F</variation>
    <location>
        <position position="334"/>
    </location>
</feature>
<feature type="mutagenesis site" description="Slight loss of epoxide hydrolase activity." evidence="7">
    <original>E</original>
    <variation>Q</variation>
    <variation>K</variation>
    <location>
        <position position="433"/>
    </location>
</feature>
<feature type="mutagenesis site" description="Slight loss of epoxide hydrolase activity." evidence="7">
    <original>D</original>
    <variation>Y</variation>
    <location>
        <position position="434"/>
    </location>
</feature>
<feature type="mutagenesis site" description="No effect." evidence="7">
    <original>E</original>
    <variation>Q</variation>
    <variation>K</variation>
    <location>
        <position position="493"/>
    </location>
</feature>
<feature type="mutagenesis site" description="Loss of epoxide hydrolase activity." evidence="7">
    <original>D</original>
    <variation>H</variation>
    <location>
        <position position="495"/>
    </location>
</feature>
<feature type="mutagenesis site" description="Reduces epoxide hydrolase activity by 50%. Loss of activity; when associated with Y-521." evidence="7">
    <original>H</original>
    <variation>Y</variation>
    <location>
        <position position="517"/>
    </location>
</feature>
<feature type="mutagenesis site" description="Loss of epoxide hydrolase activity; when associated with Y-517." evidence="7">
    <original>C</original>
    <variation>Y</variation>
    <location>
        <position position="521"/>
    </location>
</feature>
<feature type="mutagenesis site" description="Loss of epoxide hydrolase activity." evidence="7">
    <original>H</original>
    <variation>D</variation>
    <variation>N</variation>
    <variation>Y</variation>
    <location>
        <position position="523"/>
    </location>
</feature>
<feature type="mutagenesis site" description="Reduces epoxide hydrolase activity by 80%; when associated with T-542." evidence="7">
    <original>Q</original>
    <variation>H</variation>
    <location>
        <position position="526"/>
    </location>
</feature>
<feature type="mutagenesis site" description="Reduces epoxide hydrolase activity by 95%." evidence="7">
    <original>W</original>
    <variation>L</variation>
    <variation>S</variation>
    <location>
        <position position="540"/>
    </location>
</feature>
<feature type="mutagenesis site" description="Reduces epoxide hydrolase activity by 80%; when associated with H-526." evidence="7">
    <original>K</original>
    <variation>T</variation>
    <location>
        <position position="542"/>
    </location>
</feature>
<organism>
    <name type="scientific">Rattus norvegicus</name>
    <name type="common">Rat</name>
    <dbReference type="NCBI Taxonomy" id="10116"/>
    <lineage>
        <taxon>Eukaryota</taxon>
        <taxon>Metazoa</taxon>
        <taxon>Chordata</taxon>
        <taxon>Craniata</taxon>
        <taxon>Vertebrata</taxon>
        <taxon>Euteleostomi</taxon>
        <taxon>Mammalia</taxon>
        <taxon>Eutheria</taxon>
        <taxon>Euarchontoglires</taxon>
        <taxon>Glires</taxon>
        <taxon>Rodentia</taxon>
        <taxon>Myomorpha</taxon>
        <taxon>Muroidea</taxon>
        <taxon>Muridae</taxon>
        <taxon>Murinae</taxon>
        <taxon>Rattus</taxon>
    </lineage>
</organism>
<gene>
    <name evidence="10" type="primary">Ephx2</name>
</gene>
<evidence type="ECO:0000250" key="1"/>
<evidence type="ECO:0000250" key="2">
    <source>
        <dbReference type="UniProtKB" id="P34913"/>
    </source>
</evidence>
<evidence type="ECO:0000250" key="3">
    <source>
        <dbReference type="UniProtKB" id="P34914"/>
    </source>
</evidence>
<evidence type="ECO:0000255" key="4"/>
<evidence type="ECO:0000269" key="5">
    <source>
    </source>
</evidence>
<evidence type="ECO:0000269" key="6">
    <source>
    </source>
</evidence>
<evidence type="ECO:0000269" key="7">
    <source>
    </source>
</evidence>
<evidence type="ECO:0000305" key="8"/>
<evidence type="ECO:0000305" key="9">
    <source>
    </source>
</evidence>
<evidence type="ECO:0000312" key="10">
    <source>
        <dbReference type="RGD" id="620732"/>
    </source>
</evidence>
<dbReference type="EC" id="3.3.2.10" evidence="7"/>
<dbReference type="EC" id="3.1.3.76" evidence="9"/>
<dbReference type="EMBL" id="X65083">
    <property type="protein sequence ID" value="CAA46211.1"/>
    <property type="molecule type" value="mRNA"/>
</dbReference>
<dbReference type="EMBL" id="X60328">
    <property type="protein sequence ID" value="CAA42898.1"/>
    <property type="molecule type" value="mRNA"/>
</dbReference>
<dbReference type="PIR" id="A47503">
    <property type="entry name" value="A47503"/>
</dbReference>
<dbReference type="RefSeq" id="NP_075225.1">
    <property type="nucleotide sequence ID" value="NM_022936.1"/>
</dbReference>
<dbReference type="SMR" id="P80299"/>
<dbReference type="FunCoup" id="P80299">
    <property type="interactions" value="893"/>
</dbReference>
<dbReference type="STRING" id="10116.ENSRNOP00000023385"/>
<dbReference type="BindingDB" id="P80299"/>
<dbReference type="ChEMBL" id="CHEMBL5669"/>
<dbReference type="DrugCentral" id="P80299"/>
<dbReference type="GuidetoPHARMACOLOGY" id="2970"/>
<dbReference type="SwissLipids" id="SLP:000001643"/>
<dbReference type="ESTHER" id="ratno-hyes">
    <property type="family name" value="Epoxide_hydrolase"/>
</dbReference>
<dbReference type="MEROPS" id="S33.973"/>
<dbReference type="CarbonylDB" id="P80299"/>
<dbReference type="GlyGen" id="P80299">
    <property type="glycosylation" value="1 site"/>
</dbReference>
<dbReference type="iPTMnet" id="P80299"/>
<dbReference type="PhosphoSitePlus" id="P80299"/>
<dbReference type="PaxDb" id="10116-ENSRNOP00000023385"/>
<dbReference type="GeneID" id="65030"/>
<dbReference type="KEGG" id="rno:65030"/>
<dbReference type="UCSC" id="RGD:620732">
    <property type="organism name" value="rat"/>
</dbReference>
<dbReference type="AGR" id="RGD:620732"/>
<dbReference type="CTD" id="2053"/>
<dbReference type="RGD" id="620732">
    <property type="gene designation" value="Ephx2"/>
</dbReference>
<dbReference type="eggNOG" id="KOG3085">
    <property type="taxonomic scope" value="Eukaryota"/>
</dbReference>
<dbReference type="eggNOG" id="KOG4178">
    <property type="taxonomic scope" value="Eukaryota"/>
</dbReference>
<dbReference type="InParanoid" id="P80299"/>
<dbReference type="OrthoDB" id="59972at9989"/>
<dbReference type="PhylomeDB" id="P80299"/>
<dbReference type="BRENDA" id="3.3.2.10">
    <property type="organism ID" value="5301"/>
</dbReference>
<dbReference type="Reactome" id="R-RNO-2142670">
    <property type="pathway name" value="Synthesis of epoxy (EET) and dihydroxyeicosatrienoic acids (DHET)"/>
</dbReference>
<dbReference type="Reactome" id="R-RNO-9018682">
    <property type="pathway name" value="Biosynthesis of maresins"/>
</dbReference>
<dbReference type="Reactome" id="R-RNO-9033241">
    <property type="pathway name" value="Peroxisomal protein import"/>
</dbReference>
<dbReference type="SABIO-RK" id="P80299"/>
<dbReference type="PRO" id="PR:P80299"/>
<dbReference type="Proteomes" id="UP000002494">
    <property type="component" value="Unplaced"/>
</dbReference>
<dbReference type="GO" id="GO:0005829">
    <property type="term" value="C:cytosol"/>
    <property type="evidence" value="ECO:0000266"/>
    <property type="project" value="RGD"/>
</dbReference>
<dbReference type="GO" id="GO:0005777">
    <property type="term" value="C:peroxisome"/>
    <property type="evidence" value="ECO:0000314"/>
    <property type="project" value="RGD"/>
</dbReference>
<dbReference type="GO" id="GO:0033885">
    <property type="term" value="F:10-hydroxy-9-(phosphonooxy)octadecanoate phosphatase activity"/>
    <property type="evidence" value="ECO:0007669"/>
    <property type="project" value="UniProtKB-EC"/>
</dbReference>
<dbReference type="GO" id="GO:0004301">
    <property type="term" value="F:epoxide hydrolase activity"/>
    <property type="evidence" value="ECO:0000314"/>
    <property type="project" value="UniProtKB"/>
</dbReference>
<dbReference type="GO" id="GO:0042577">
    <property type="term" value="F:lipid phosphatase activity"/>
    <property type="evidence" value="ECO:0000250"/>
    <property type="project" value="UniProtKB"/>
</dbReference>
<dbReference type="GO" id="GO:0052642">
    <property type="term" value="F:lysophosphatidic acid phosphatase activity"/>
    <property type="evidence" value="ECO:0000250"/>
    <property type="project" value="UniProtKB"/>
</dbReference>
<dbReference type="GO" id="GO:0000287">
    <property type="term" value="F:magnesium ion binding"/>
    <property type="evidence" value="ECO:0000315"/>
    <property type="project" value="RGD"/>
</dbReference>
<dbReference type="GO" id="GO:0016791">
    <property type="term" value="F:phosphatase activity"/>
    <property type="evidence" value="ECO:0000314"/>
    <property type="project" value="RGD"/>
</dbReference>
<dbReference type="GO" id="GO:0042803">
    <property type="term" value="F:protein homodimerization activity"/>
    <property type="evidence" value="ECO:0000266"/>
    <property type="project" value="RGD"/>
</dbReference>
<dbReference type="GO" id="GO:0015643">
    <property type="term" value="F:toxic substance binding"/>
    <property type="evidence" value="ECO:0000266"/>
    <property type="project" value="RGD"/>
</dbReference>
<dbReference type="GO" id="GO:0042632">
    <property type="term" value="P:cholesterol homeostasis"/>
    <property type="evidence" value="ECO:0000266"/>
    <property type="project" value="RGD"/>
</dbReference>
<dbReference type="GO" id="GO:0097176">
    <property type="term" value="P:epoxide metabolic process"/>
    <property type="evidence" value="ECO:0000314"/>
    <property type="project" value="UniProtKB"/>
</dbReference>
<dbReference type="GO" id="GO:0043651">
    <property type="term" value="P:linoleic acid metabolic process"/>
    <property type="evidence" value="ECO:0000315"/>
    <property type="project" value="RGD"/>
</dbReference>
<dbReference type="GO" id="GO:0046839">
    <property type="term" value="P:phospholipid dephosphorylation"/>
    <property type="evidence" value="ECO:0000250"/>
    <property type="project" value="UniProtKB"/>
</dbReference>
<dbReference type="GO" id="GO:0045777">
    <property type="term" value="P:positive regulation of blood pressure"/>
    <property type="evidence" value="ECO:0000315"/>
    <property type="project" value="RGD"/>
</dbReference>
<dbReference type="GO" id="GO:0010628">
    <property type="term" value="P:positive regulation of gene expression"/>
    <property type="evidence" value="ECO:0000266"/>
    <property type="project" value="RGD"/>
</dbReference>
<dbReference type="GO" id="GO:0002539">
    <property type="term" value="P:prostaglandin production involved in inflammatory response"/>
    <property type="evidence" value="ECO:0000315"/>
    <property type="project" value="RGD"/>
</dbReference>
<dbReference type="GO" id="GO:0090181">
    <property type="term" value="P:regulation of cholesterol metabolic process"/>
    <property type="evidence" value="ECO:0000266"/>
    <property type="project" value="RGD"/>
</dbReference>
<dbReference type="GO" id="GO:1904681">
    <property type="term" value="P:response to 3-methylcholanthrene"/>
    <property type="evidence" value="ECO:0000270"/>
    <property type="project" value="RGD"/>
</dbReference>
<dbReference type="GO" id="GO:0009636">
    <property type="term" value="P:response to toxic substance"/>
    <property type="evidence" value="ECO:0007669"/>
    <property type="project" value="UniProtKB-KW"/>
</dbReference>
<dbReference type="GO" id="GO:0046272">
    <property type="term" value="P:stilbene catabolic process"/>
    <property type="evidence" value="ECO:0000266"/>
    <property type="project" value="RGD"/>
</dbReference>
<dbReference type="CDD" id="cd02603">
    <property type="entry name" value="HAD_sEH-N_like"/>
    <property type="match status" value="1"/>
</dbReference>
<dbReference type="FunFam" id="1.10.150.240:FF:000011">
    <property type="entry name" value="Bifunctional epoxide hydrolase 2"/>
    <property type="match status" value="1"/>
</dbReference>
<dbReference type="FunFam" id="3.40.50.1820:FF:000067">
    <property type="entry name" value="Bifunctional epoxide hydrolase 2"/>
    <property type="match status" value="1"/>
</dbReference>
<dbReference type="Gene3D" id="3.40.50.1820">
    <property type="entry name" value="alpha/beta hydrolase"/>
    <property type="match status" value="1"/>
</dbReference>
<dbReference type="Gene3D" id="3.40.50.1000">
    <property type="entry name" value="HAD superfamily/HAD-like"/>
    <property type="match status" value="1"/>
</dbReference>
<dbReference type="Gene3D" id="1.10.150.240">
    <property type="entry name" value="Putative phosphatase, domain 2"/>
    <property type="match status" value="1"/>
</dbReference>
<dbReference type="InterPro" id="IPR000073">
    <property type="entry name" value="AB_hydrolase_1"/>
</dbReference>
<dbReference type="InterPro" id="IPR029058">
    <property type="entry name" value="AB_hydrolase_fold"/>
</dbReference>
<dbReference type="InterPro" id="IPR000639">
    <property type="entry name" value="Epox_hydrolase-like"/>
</dbReference>
<dbReference type="InterPro" id="IPR036412">
    <property type="entry name" value="HAD-like_sf"/>
</dbReference>
<dbReference type="InterPro" id="IPR006439">
    <property type="entry name" value="HAD-SF_hydro_IA"/>
</dbReference>
<dbReference type="InterPro" id="IPR011945">
    <property type="entry name" value="HAD-SF_ppase_IA/epoxid_hydro_N"/>
</dbReference>
<dbReference type="InterPro" id="IPR023214">
    <property type="entry name" value="HAD_sf"/>
</dbReference>
<dbReference type="InterPro" id="IPR023198">
    <property type="entry name" value="PGP-like_dom2"/>
</dbReference>
<dbReference type="NCBIfam" id="TIGR02247">
    <property type="entry name" value="HAD-1A3-hyp"/>
    <property type="match status" value="1"/>
</dbReference>
<dbReference type="NCBIfam" id="TIGR01509">
    <property type="entry name" value="HAD-SF-IA-v3"/>
    <property type="match status" value="1"/>
</dbReference>
<dbReference type="PANTHER" id="PTHR43329">
    <property type="entry name" value="EPOXIDE HYDROLASE"/>
    <property type="match status" value="1"/>
</dbReference>
<dbReference type="Pfam" id="PF00561">
    <property type="entry name" value="Abhydrolase_1"/>
    <property type="match status" value="1"/>
</dbReference>
<dbReference type="Pfam" id="PF00702">
    <property type="entry name" value="Hydrolase"/>
    <property type="match status" value="1"/>
</dbReference>
<dbReference type="PRINTS" id="PR00111">
    <property type="entry name" value="ABHYDROLASE"/>
</dbReference>
<dbReference type="PRINTS" id="PR00412">
    <property type="entry name" value="EPOXHYDRLASE"/>
</dbReference>
<dbReference type="SFLD" id="SFLDG01130">
    <property type="entry name" value="C1.5.1:_Epoxide_Hydrolase_Phos"/>
    <property type="match status" value="1"/>
</dbReference>
<dbReference type="SFLD" id="SFLDS00003">
    <property type="entry name" value="Haloacid_Dehalogenase"/>
    <property type="match status" value="1"/>
</dbReference>
<dbReference type="SUPFAM" id="SSF53474">
    <property type="entry name" value="alpha/beta-Hydrolases"/>
    <property type="match status" value="1"/>
</dbReference>
<dbReference type="SUPFAM" id="SSF56784">
    <property type="entry name" value="HAD-like"/>
    <property type="match status" value="1"/>
</dbReference>
<comment type="function">
    <text evidence="2 5 7">Bifunctional enzyme (PubMed:12574508, PubMed:8626766). The C-terminal domain has epoxide hydrolase activity and acts on epoxides (alkene oxides, oxiranes) and arene oxides (PubMed:8626766). Plays a role in xenobiotic metabolism by degrading potentially toxic epoxides (PubMed:8626766). Also determines steady-state levels of physiological mediators (By similarity). The N-terminal domain has lipid phosphatase activity, with the highest activity towards threo-9,10-phosphonooxy-hydroxy-octadecanoic acid, followed by erythro-9,10-phosphonooxy-hydroxy-octadecanoic acid, 12-phosphonooxy-octadec-9Z-enoic acid and 12-phosphonooxy-octadec-9E-enoic acid (By similarity).</text>
</comment>
<comment type="function">
    <text evidence="2 7">Bifunctional enzyme (PubMed:12574508, PubMed:8626766). The C-terminal domain has epoxide hydrolase activity and acts on epoxides (alkene oxides, oxiranes) and arene oxides (PubMed:8626766). Plays a role in xenobiotic metabolism by degrading potentially toxic epoxides (By similarity). Also determines steady-state levels of physiological mediators (By similarity).</text>
</comment>
<comment type="function">
    <text evidence="2 5">Bifunctional enzyme (PubMed:12574508, PubMed:8626766). The N-terminal domain has lipid phosphatase activity, with the highest activity towards threo-9,10-phosphonooxy-hydroxy-octadecanoic acid, followed by erythro-9,10-phosphonooxy-hydroxy-octadecanoic acid, 12-phosphonooxy-octadec-9Z-enoic acid and 12-phosphonooxy-octadec-9E-enoic acid (PubMed:12574508). Has phosphatase activity toward lyso-glycerophospholipids with also some lower activity toward lysolipids of sphingolipid and isoprenoid phosphates (By similarity).</text>
</comment>
<comment type="catalytic activity">
    <reaction evidence="7">
        <text>an epoxide + H2O = an ethanediol</text>
        <dbReference type="Rhea" id="RHEA:19037"/>
        <dbReference type="ChEBI" id="CHEBI:15377"/>
        <dbReference type="ChEBI" id="CHEBI:32955"/>
        <dbReference type="ChEBI" id="CHEBI:140594"/>
        <dbReference type="EC" id="3.3.2.10"/>
    </reaction>
</comment>
<comment type="catalytic activity">
    <reaction evidence="9">
        <text>(9S,10S)-10-hydroxy-9-(phosphooxy)octadecanoate + H2O = (9S,10S)-9,10-dihydroxyoctadecanoate + phosphate</text>
        <dbReference type="Rhea" id="RHEA:16537"/>
        <dbReference type="ChEBI" id="CHEBI:15377"/>
        <dbReference type="ChEBI" id="CHEBI:43474"/>
        <dbReference type="ChEBI" id="CHEBI:58796"/>
        <dbReference type="ChEBI" id="CHEBI:58797"/>
        <dbReference type="EC" id="3.1.3.76"/>
    </reaction>
</comment>
<comment type="catalytic activity">
    <reaction evidence="6">
        <text>8-hydroxy-(11S,12S)-epoxy-(5Z,9E,14Z)-eicosatrienoate + H2O = (8,11R,12S)-trihydroxy-(5Z,9E,14Z)-eicosatrienoate</text>
        <dbReference type="Rhea" id="RHEA:50896"/>
        <dbReference type="ChEBI" id="CHEBI:15377"/>
        <dbReference type="ChEBI" id="CHEBI:78100"/>
        <dbReference type="ChEBI" id="CHEBI:132127"/>
    </reaction>
    <physiologicalReaction direction="left-to-right" evidence="6">
        <dbReference type="Rhea" id="RHEA:50897"/>
    </physiologicalReaction>
</comment>
<comment type="catalytic activity">
    <reaction evidence="6">
        <text>10-hydroxy-(11S,12S)-epoxy- (5Z,8Z,14Z)-eicosatrienoate + H2O = (10,11S,12R)-trihydroxy-(5Z,8Z,14Z)-eicosatrienoate</text>
        <dbReference type="Rhea" id="RHEA:50900"/>
        <dbReference type="ChEBI" id="CHEBI:15377"/>
        <dbReference type="ChEBI" id="CHEBI:78084"/>
        <dbReference type="ChEBI" id="CHEBI:78099"/>
    </reaction>
    <physiologicalReaction direction="left-to-right" evidence="6">
        <dbReference type="Rhea" id="RHEA:50901"/>
    </physiologicalReaction>
</comment>
<comment type="catalytic activity">
    <reaction evidence="2">
        <text>12-phosphooxy-(9Z)-octadecenoate + H2O = 12-hydroxy-(9Z)-octadecenoate + phosphate</text>
        <dbReference type="Rhea" id="RHEA:45272"/>
        <dbReference type="ChEBI" id="CHEBI:15377"/>
        <dbReference type="ChEBI" id="CHEBI:43474"/>
        <dbReference type="ChEBI" id="CHEBI:85141"/>
        <dbReference type="ChEBI" id="CHEBI:85150"/>
    </reaction>
    <physiologicalReaction direction="left-to-right" evidence="2">
        <dbReference type="Rhea" id="RHEA:45273"/>
    </physiologicalReaction>
</comment>
<comment type="catalytic activity">
    <reaction evidence="2">
        <text>12-phosphooxy-(9E)-octadecenoate + H2O = 12-hydroxy-(9E)-octadecenoate + phosphate</text>
        <dbReference type="Rhea" id="RHEA:45276"/>
        <dbReference type="ChEBI" id="CHEBI:15377"/>
        <dbReference type="ChEBI" id="CHEBI:43474"/>
        <dbReference type="ChEBI" id="CHEBI:85137"/>
        <dbReference type="ChEBI" id="CHEBI:85152"/>
    </reaction>
    <physiologicalReaction direction="left-to-right" evidence="2">
        <dbReference type="Rhea" id="RHEA:45277"/>
    </physiologicalReaction>
</comment>
<comment type="catalytic activity">
    <reaction evidence="2">
        <text>12-(phosphooxy)octadecanoate + H2O = 12-hydroxyoctadecanoate + phosphate</text>
        <dbReference type="Rhea" id="RHEA:45280"/>
        <dbReference type="ChEBI" id="CHEBI:15377"/>
        <dbReference type="ChEBI" id="CHEBI:43474"/>
        <dbReference type="ChEBI" id="CHEBI:84201"/>
        <dbReference type="ChEBI" id="CHEBI:85134"/>
    </reaction>
    <physiologicalReaction direction="left-to-right" evidence="2">
        <dbReference type="Rhea" id="RHEA:45281"/>
    </physiologicalReaction>
</comment>
<comment type="catalytic activity">
    <reaction evidence="2">
        <text>8,9-epoxy-(5Z,11Z,14Z)-eicosatrienoate + H2O = 8,9-dihydroxy-(5Z,11Z,14Z)-eicosatrienoate</text>
        <dbReference type="Rhea" id="RHEA:44048"/>
        <dbReference type="ChEBI" id="CHEBI:15377"/>
        <dbReference type="ChEBI" id="CHEBI:84025"/>
        <dbReference type="ChEBI" id="CHEBI:84032"/>
    </reaction>
    <physiologicalReaction direction="left-to-right" evidence="2">
        <dbReference type="Rhea" id="RHEA:44049"/>
    </physiologicalReaction>
</comment>
<comment type="catalytic activity">
    <reaction evidence="2">
        <text>11,12-epoxy-(5Z,8Z,14Z)-eicosatrienoate + H2O = 11,12-dihydroxy-(5Z,8Z,14Z)-eicosatrienoate</text>
        <dbReference type="Rhea" id="RHEA:44044"/>
        <dbReference type="ChEBI" id="CHEBI:15377"/>
        <dbReference type="ChEBI" id="CHEBI:76625"/>
        <dbReference type="ChEBI" id="CHEBI:84031"/>
    </reaction>
    <physiologicalReaction direction="left-to-right" evidence="2">
        <dbReference type="Rhea" id="RHEA:44045"/>
    </physiologicalReaction>
</comment>
<comment type="catalytic activity">
    <reaction evidence="2">
        <text>14,15-epoxy-(5Z,8Z,11Z)-eicosatrienoate + H2O = 14,15-dihydroxy-(5Z,8Z,11Z)-eicosatrienoate</text>
        <dbReference type="Rhea" id="RHEA:44040"/>
        <dbReference type="ChEBI" id="CHEBI:15377"/>
        <dbReference type="ChEBI" id="CHEBI:84024"/>
        <dbReference type="ChEBI" id="CHEBI:84029"/>
    </reaction>
    <physiologicalReaction direction="left-to-right" evidence="2">
        <dbReference type="Rhea" id="RHEA:44041"/>
    </physiologicalReaction>
</comment>
<comment type="catalytic activity">
    <reaction evidence="2">
        <text>9,10-epoxy-(12Z)-octadecenoate + H2O = 9,10-dihydroxy-(12Z)-octadecenoate</text>
        <dbReference type="Rhea" id="RHEA:44032"/>
        <dbReference type="ChEBI" id="CHEBI:15377"/>
        <dbReference type="ChEBI" id="CHEBI:84023"/>
        <dbReference type="ChEBI" id="CHEBI:84027"/>
    </reaction>
    <physiologicalReaction direction="left-to-right" evidence="2">
        <dbReference type="Rhea" id="RHEA:44033"/>
    </physiologicalReaction>
</comment>
<comment type="catalytic activity">
    <reaction evidence="2">
        <text>1-tetradecanoyl-sn-glycerol 3-phosphate + H2O = 1-tetradecanoyl-sn-glycerol + phosphate</text>
        <dbReference type="Rhea" id="RHEA:53592"/>
        <dbReference type="ChEBI" id="CHEBI:15377"/>
        <dbReference type="ChEBI" id="CHEBI:43474"/>
        <dbReference type="ChEBI" id="CHEBI:72683"/>
        <dbReference type="ChEBI" id="CHEBI:75536"/>
    </reaction>
    <physiologicalReaction direction="left-to-right" evidence="2">
        <dbReference type="Rhea" id="RHEA:53593"/>
    </physiologicalReaction>
</comment>
<comment type="catalytic activity">
    <reaction evidence="2">
        <text>1-octadecanoyl-sn-glycero-3-phosphate + H2O = 1-octadecanoyl-sn-glycerol + phosphate</text>
        <dbReference type="Rhea" id="RHEA:53596"/>
        <dbReference type="ChEBI" id="CHEBI:15377"/>
        <dbReference type="ChEBI" id="CHEBI:43474"/>
        <dbReference type="ChEBI" id="CHEBI:74565"/>
        <dbReference type="ChEBI" id="CHEBI:75550"/>
    </reaction>
    <physiologicalReaction direction="left-to-right" evidence="2">
        <dbReference type="Rhea" id="RHEA:53597"/>
    </physiologicalReaction>
</comment>
<comment type="catalytic activity">
    <reaction evidence="2">
        <text>1-(5Z,8Z,11Z,14Z-eicosatetraenoyl)-sn-glycero-3-phosphate + H2O = 1-(5Z,8Z,11Z,14Z-eicosatetraenoyl)-sn-glycerol + phosphate</text>
        <dbReference type="Rhea" id="RHEA:53600"/>
        <dbReference type="ChEBI" id="CHEBI:15377"/>
        <dbReference type="ChEBI" id="CHEBI:34071"/>
        <dbReference type="ChEBI" id="CHEBI:43474"/>
        <dbReference type="ChEBI" id="CHEBI:74938"/>
    </reaction>
    <physiologicalReaction direction="left-to-right" evidence="2">
        <dbReference type="Rhea" id="RHEA:53601"/>
    </physiologicalReaction>
</comment>
<comment type="catalytic activity">
    <reaction evidence="2">
        <text>1-hexadecanoyl-sn-glycero-3-phosphate + H2O = 1-hexadecanoyl-sn-glycerol + phosphate</text>
        <dbReference type="Rhea" id="RHEA:53604"/>
        <dbReference type="ChEBI" id="CHEBI:15377"/>
        <dbReference type="ChEBI" id="CHEBI:43474"/>
        <dbReference type="ChEBI" id="CHEBI:57518"/>
        <dbReference type="ChEBI" id="CHEBI:75542"/>
    </reaction>
    <physiologicalReaction direction="left-to-right" evidence="2">
        <dbReference type="Rhea" id="RHEA:53605"/>
    </physiologicalReaction>
</comment>
<comment type="catalytic activity">
    <reaction evidence="2">
        <text>1-(9Z-octadecenoyl)-sn-glycero-3-phosphate + H2O = 1-(9Z-octadecenoyl)-sn-glycerol + phosphate</text>
        <dbReference type="Rhea" id="RHEA:39835"/>
        <dbReference type="ChEBI" id="CHEBI:15377"/>
        <dbReference type="ChEBI" id="CHEBI:43474"/>
        <dbReference type="ChEBI" id="CHEBI:74544"/>
        <dbReference type="ChEBI" id="CHEBI:75757"/>
    </reaction>
    <physiologicalReaction direction="left-to-right" evidence="2">
        <dbReference type="Rhea" id="RHEA:39836"/>
    </physiologicalReaction>
</comment>
<comment type="catalytic activity">
    <reaction evidence="3">
        <text>(8S,9R)-epoxy-(5Z,11Z,14Z)-eicosatrienoate + H2O = (8S,9S)-dihydroxy-(5Z,11Z,14Z)-eicosatrienoate</text>
        <dbReference type="Rhea" id="RHEA:53972"/>
        <dbReference type="ChEBI" id="CHEBI:15377"/>
        <dbReference type="ChEBI" id="CHEBI:131974"/>
        <dbReference type="ChEBI" id="CHEBI:138002"/>
    </reaction>
    <physiologicalReaction direction="left-to-right" evidence="3">
        <dbReference type="Rhea" id="RHEA:53973"/>
    </physiologicalReaction>
</comment>
<comment type="catalytic activity">
    <reaction evidence="3">
        <text>(11S,12R)-epoxy-(5Z,8Z,14Z)-eicosatrienoate + H2O = (11R,12R)-dihydroxy-(5Z,8Z,14Z)-eicosatrienoate</text>
        <dbReference type="Rhea" id="RHEA:53980"/>
        <dbReference type="ChEBI" id="CHEBI:15377"/>
        <dbReference type="ChEBI" id="CHEBI:131969"/>
        <dbReference type="ChEBI" id="CHEBI:138004"/>
    </reaction>
    <physiologicalReaction direction="left-to-right" evidence="3">
        <dbReference type="Rhea" id="RHEA:53981"/>
    </physiologicalReaction>
</comment>
<comment type="catalytic activity">
    <reaction evidence="3">
        <text>(11S,12R)-epoxy-(5Z,8Z,14Z)-eicosatrienoate + H2O = (11S,12S)-dihydroxy-(5Z,8Z,14Z)-eicosatrienoate</text>
        <dbReference type="Rhea" id="RHEA:53984"/>
        <dbReference type="ChEBI" id="CHEBI:15377"/>
        <dbReference type="ChEBI" id="CHEBI:131969"/>
        <dbReference type="ChEBI" id="CHEBI:138005"/>
    </reaction>
    <physiologicalReaction direction="left-to-right" evidence="3">
        <dbReference type="Rhea" id="RHEA:53985"/>
    </physiologicalReaction>
</comment>
<comment type="catalytic activity">
    <reaction evidence="3">
        <text>(14S,15R)-epoxy-(5Z,8Z,11Z)-eicosatrienoate + H2O = (14R,15R)-dihydroxy-(5Z,8Z,11Z)-eicosatrienoate</text>
        <dbReference type="Rhea" id="RHEA:53992"/>
        <dbReference type="ChEBI" id="CHEBI:15377"/>
        <dbReference type="ChEBI" id="CHEBI:131964"/>
        <dbReference type="ChEBI" id="CHEBI:138003"/>
    </reaction>
    <physiologicalReaction direction="left-to-right" evidence="3">
        <dbReference type="Rhea" id="RHEA:53993"/>
    </physiologicalReaction>
</comment>
<comment type="catalytic activity">
    <reaction evidence="3">
        <text>(14S,15R)-epoxy-(5Z,8Z,11Z)-eicosatrienoate + H2O = (14S,15S)-dihydroxy-(5Z,8Z,11Z)-eicosatrienoate</text>
        <dbReference type="Rhea" id="RHEA:53996"/>
        <dbReference type="ChEBI" id="CHEBI:15377"/>
        <dbReference type="ChEBI" id="CHEBI:131964"/>
        <dbReference type="ChEBI" id="CHEBI:138006"/>
    </reaction>
    <physiologicalReaction direction="left-to-right" evidence="3">
        <dbReference type="Rhea" id="RHEA:53997"/>
    </physiologicalReaction>
</comment>
<comment type="catalytic activity">
    <reaction evidence="3">
        <text>(11R,12S)-epoxy-(5Z,8Z,14Z)-eicosatrienoate + H2O = (11S,12S)-dihydroxy-(5Z,8Z,14Z)-eicosatrienoate</text>
        <dbReference type="Rhea" id="RHEA:54004"/>
        <dbReference type="ChEBI" id="CHEBI:15377"/>
        <dbReference type="ChEBI" id="CHEBI:131970"/>
        <dbReference type="ChEBI" id="CHEBI:138005"/>
    </reaction>
    <physiologicalReaction direction="left-to-right" evidence="3">
        <dbReference type="Rhea" id="RHEA:54005"/>
    </physiologicalReaction>
</comment>
<comment type="catalytic activity">
    <reaction evidence="3">
        <text>(11R,12S)-epoxy-(5Z,8Z,14Z)-eicosatrienoate + H2O = (11R,12R)-dihydroxy-(5Z,8Z,14Z)-eicosatrienoate</text>
        <dbReference type="Rhea" id="RHEA:54000"/>
        <dbReference type="ChEBI" id="CHEBI:15377"/>
        <dbReference type="ChEBI" id="CHEBI:131970"/>
        <dbReference type="ChEBI" id="CHEBI:138004"/>
    </reaction>
    <physiologicalReaction direction="left-to-right" evidence="3">
        <dbReference type="Rhea" id="RHEA:54001"/>
    </physiologicalReaction>
</comment>
<comment type="catalytic activity">
    <reaction evidence="3">
        <text>(8S,9R)-epoxy-(5Z,11Z,14Z)-eicosatrienoate + H2O = (8R,9R)-dihydroxy-(5Z,11Z,14Z)-eicosatrienoate</text>
        <dbReference type="Rhea" id="RHEA:54016"/>
        <dbReference type="ChEBI" id="CHEBI:15377"/>
        <dbReference type="ChEBI" id="CHEBI:131974"/>
        <dbReference type="ChEBI" id="CHEBI:138008"/>
    </reaction>
    <physiologicalReaction direction="left-to-right" evidence="3">
        <dbReference type="Rhea" id="RHEA:54017"/>
    </physiologicalReaction>
</comment>
<comment type="catalytic activity">
    <reaction evidence="3">
        <text>(14R,15S)-epoxy-(5Z,8Z,11Z)-eicosatrienoate + H2O = (14R,15R)-dihydroxy-(5Z,8Z,11Z)-eicosatrienoate</text>
        <dbReference type="Rhea" id="RHEA:53976"/>
        <dbReference type="ChEBI" id="CHEBI:15377"/>
        <dbReference type="ChEBI" id="CHEBI:131965"/>
        <dbReference type="ChEBI" id="CHEBI:138003"/>
    </reaction>
    <physiologicalReaction direction="left-to-right" evidence="3">
        <dbReference type="Rhea" id="RHEA:53977"/>
    </physiologicalReaction>
</comment>
<comment type="cofactor">
    <cofactor evidence="2">
        <name>Mg(2+)</name>
        <dbReference type="ChEBI" id="CHEBI:18420"/>
    </cofactor>
</comment>
<comment type="activity regulation">
    <text evidence="2 6">Inhibited by 1-(1-acetylpiperidin-4-yl)-3-(4-(trifl uoromethoxy)phenyl)urea (TPAU), 1-cyclohexyl-3-dodecylurea (CDU), 12-(3-adamantan-1-yl-ureido)-dodecanoic acid (AUDA), 1-((3S, 5S, 7S)-adamantan-1-yl)-3-(5-(2-(2-ethoxyethoxy) ethoxy)pentyl)urea (AEPU), N-adamantyl-N[']-cyclohexyl urea (ACU), 4-(((1S, 4S)-4-(3-((3S, 5S, 7S)-adamantan-1-yl) ureido)cyclohexyl)oxy)benzoic acid (c-AUCB), 4-(((1R, 4R)-4-(3-((3S, 5S, 7S)-adamantan-1-yl)ureido)cyclohexyl)oxy)benzoic acid (t-AUCB), 4-(((1R, 4R)-4-(3-(4(trifluoromethoxy)phenyl)ureido)cyclohexyl)oxy)benzoic acid (t-TAUCB) and to a lesser extent by 8-(3-((3S, 5S, 7S)-adamantan-1-yl)ureido) octanoic acid (AUOA) (PubMed:21217101). Phosphatase activity is inhibited by dodecyl-phosphate, phospholipids such as phospho-lysophosphatidic acids and fatty acids such as palmitic acid and lauric acid (By similarity).</text>
</comment>
<comment type="biophysicochemical properties">
    <kinetics>
        <KM evidence="5">0.235 mM for p-nitrophenyl phosphate</KM>
        <KM evidence="6">4.6 uM for 8-hydroxy-(11S,12S)-epoxy-(5Z,9E,14Z)-eicosatrienoate</KM>
        <KM evidence="6">14.7 uM for 10-hydroxy-(11S,12S)-epoxy- (5Z,8Z,14Z)-eicosatrienoate</KM>
        <Vmax evidence="5">1450.0 nmol/min/mg enzyme</Vmax>
        <Vmax evidence="6">1739.0 nmol/min/mg enzyme with 8-hydroxy-(11S,12S)-epoxy-(5Z,9E,14Z)-eicosatrienoate as substrate</Vmax>
        <Vmax evidence="6">550.0 nmol/min/mg enzyme with 10-hydroxy-(11S,12S)-epoxy- (5Z,8Z,14Z)-eicosatrienoate as substrate</Vmax>
    </kinetics>
</comment>
<comment type="subunit">
    <text>Homodimer.</text>
</comment>
<comment type="subcellular location">
    <subcellularLocation>
        <location>Cytoplasm</location>
    </subcellularLocation>
    <subcellularLocation>
        <location>Peroxisome</location>
    </subcellularLocation>
</comment>
<comment type="induction">
    <text>By compounds that cause peroxisome proliferation such as clofibrate, tiadenol and fenofibrate.</text>
</comment>
<comment type="domain">
    <text>The N-terminal domain has phosphatase activity. The C-terminal domain has epoxide hydrolase activity.</text>
</comment>
<comment type="PTM">
    <text evidence="1">The covalent modification of cysteine by 15-deoxy-Delta12,14-prostaglandin-J2 is autocatalytic and reversible. It may occur as an alternative to other cysteine modifications, such as S-nitrosylation and S-palmitoylation (By similarity).</text>
</comment>
<comment type="similarity">
    <text evidence="8">Belongs to the AB hydrolase superfamily. Epoxide hydrolase family.</text>
</comment>
<sequence>MALRVAAFDLDGVLALPSIAGVLRHTEEALALPRDFLLGAFQMKFPEGPTEQLMKGKITFSQWVPLMDESCRKSSKACGASLPENFSISEIFSQAMAARSINRPMLQAAAALKKKGFTTCIVTNNWLDDSDKRDILAQMMCELSQHFDFLIESCQVGMIKPEPQIYKFVLDTLKAKPNEVVFLDDFGSNLKPARDMGMVTILVRDTASALRELEKVTGTQFPEAPLPVPCSPNDVSHGYVTVKPGIRLHFVEMGSGPAICLCHGFPESWFSWRYQIPALAQAGFRVLAIDMKGYGDSSSPPEIEEYAMELLCEEMVTFLNKLGIPQAVFIGHDWAGVLVWNMALFHPERVRAVASLNTPLMPPNPEVSPMEVIRSIPVFNYQLYFQEPGVAEAELEKNMSRTFKSFFRTSDDMGLLTVNKATEMGGILVGTPEDPKVSKITTEEEIEYYIQQFKKSGFRGPLNWYRNTERNWKWSCKALGRKILVPALMVTAEKDIVLRPEMSKNMENWIPFLKRGHIEDCGHWTQIEKPAEVNQILIKWLKTEIQNPSVTSKI</sequence>
<protein>
    <recommendedName>
        <fullName evidence="8">Bifunctional epoxide hydrolase 2</fullName>
    </recommendedName>
    <domain>
        <recommendedName>
            <fullName>Cytosolic epoxide hydrolase 2</fullName>
            <shortName>CEH</shortName>
            <ecNumber evidence="7">3.3.2.10</ecNumber>
        </recommendedName>
        <alternativeName>
            <fullName>Epoxide hydratase</fullName>
        </alternativeName>
        <alternativeName>
            <fullName>Soluble epoxide hydrolase</fullName>
            <shortName>SEH</shortName>
        </alternativeName>
    </domain>
    <domain>
        <recommendedName>
            <fullName>Lipid-phosphate phosphatase</fullName>
            <ecNumber evidence="9">3.1.3.76</ecNumber>
        </recommendedName>
    </domain>
</protein>
<accession>P80299</accession>
<proteinExistence type="evidence at protein level"/>
<keyword id="KW-0007">Acetylation</keyword>
<keyword id="KW-0058">Aromatic hydrocarbons catabolism</keyword>
<keyword id="KW-0963">Cytoplasm</keyword>
<keyword id="KW-0216">Detoxification</keyword>
<keyword id="KW-0903">Direct protein sequencing</keyword>
<keyword id="KW-0378">Hydrolase</keyword>
<keyword id="KW-0443">Lipid metabolism</keyword>
<keyword id="KW-0449">Lipoprotein</keyword>
<keyword id="KW-0460">Magnesium</keyword>
<keyword id="KW-0479">Metal-binding</keyword>
<keyword id="KW-0511">Multifunctional enzyme</keyword>
<keyword id="KW-0576">Peroxisome</keyword>
<keyword id="KW-0597">Phosphoprotein</keyword>
<keyword id="KW-1185">Reference proteome</keyword>
<reference key="1">
    <citation type="journal article" date="1993" name="J. Biol. Chem.">
        <title>Isolation and characterization of a cDNA encoding rat liver cytosolic epoxide hydrolase and its functional expression in Escherichia coli.</title>
        <authorList>
            <person name="Knehr M."/>
            <person name="Thomas H."/>
            <person name="Arand M."/>
            <person name="Gebel T."/>
            <person name="Zeller H.-D."/>
            <person name="Oesch F."/>
        </authorList>
    </citation>
    <scope>NUCLEOTIDE SEQUENCE [MRNA]</scope>
    <source>
        <strain>Sprague-Dawley</strain>
        <tissue>Liver</tissue>
    </source>
</reference>
<reference key="2">
    <citation type="journal article" date="1991" name="FEBS Lett.">
        <title>An impaired peroxisomal targeting sequence leading to an unusual bicompartmental distribution of cytosolic epoxide hydrolase.</title>
        <authorList>
            <person name="Arand M."/>
            <person name="Knehr M."/>
            <person name="Thomas H."/>
            <person name="Zeller H.-D."/>
            <person name="Oesch F."/>
        </authorList>
    </citation>
    <scope>NUCLEOTIDE SEQUENCE [MRNA] OF 450-554</scope>
    <scope>PARTIAL PROTEIN SEQUENCE</scope>
    <source>
        <tissue>Liver</tissue>
    </source>
</reference>
<reference key="3">
    <citation type="journal article" date="1996" name="J. Biol. Chem.">
        <title>Asp333, Asp495, and His523 form the catalytic triad of rat soluble epoxide hydrolase.</title>
        <authorList>
            <person name="Arand M."/>
            <person name="Wagner H."/>
            <person name="Oesch F."/>
        </authorList>
    </citation>
    <scope>FUNCTION</scope>
    <scope>CATALYTIC ACTIVITY</scope>
    <scope>MUTAGENESIS OF ASP-333; TRP-334; GLU-433; ASP-434; GLU-493; ASP-495; HIS-517; CYS-521; HIS-523; GLN-526; TRP-540 AND LYS-542</scope>
    <scope>ACTIVE SITE</scope>
</reference>
<reference key="4">
    <citation type="journal article" date="2003" name="Proc. Natl. Acad. Sci. U.S.A.">
        <title>The N-terminal domain of mammalian soluble epoxide hydrolase is a phosphatase.</title>
        <authorList>
            <person name="Cronin A."/>
            <person name="Mowbray S."/>
            <person name="Durk H."/>
            <person name="Homburg S."/>
            <person name="Fleming I."/>
            <person name="Fisslthaler B."/>
            <person name="Oesch F."/>
            <person name="Arand M."/>
        </authorList>
    </citation>
    <scope>FUNCTION</scope>
    <scope>PHOSPHATASE ACTIVITY</scope>
    <scope>BIOPHYSICOCHEMICAL PROPERTIES</scope>
</reference>
<reference key="5">
    <citation type="journal article" date="2011" name="J. Lipid Res.">
        <title>Mammalian soluble epoxide hydrolase is identical to liver hepoxilin hydrolase.</title>
        <authorList>
            <person name="Cronin A."/>
            <person name="Decker M."/>
            <person name="Arand M."/>
        </authorList>
    </citation>
    <scope>FUNCTION</scope>
    <scope>CATALYTIC ACTIVITY</scope>
    <scope>BIOPHYSICOCHEMICAL PROPERTIES</scope>
    <scope>ACTIVITY REGULATION</scope>
</reference>
<name>HYES_RAT</name>